<keyword id="KW-0175">Coiled coil</keyword>
<keyword id="KW-0472">Membrane</keyword>
<keyword id="KW-0496">Mitochondrion</keyword>
<keyword id="KW-1185">Reference proteome</keyword>
<keyword id="KW-0809">Transit peptide</keyword>
<keyword id="KW-0812">Transmembrane</keyword>
<keyword id="KW-1133">Transmembrane helix</keyword>
<evidence type="ECO:0000255" key="1"/>
<evidence type="ECO:0000269" key="2">
    <source>
    </source>
</evidence>
<evidence type="ECO:0000305" key="3"/>
<accession>Q10073</accession>
<protein>
    <recommendedName>
        <fullName>Uncharacterized CCDC90 family protein C3H1.08c, mitochondrial</fullName>
    </recommendedName>
</protein>
<sequence>MIIRKQIFPFLSQNRPWTIINRIQSERYSASYEPSPELLKQSSRRLEQAGYSVKNAETITNLMRTITGEALTELEKNIGFKAKQESVSFQQKRTFLQIRKYLETIEENEFDKVRKSSDKLINEIEKTKSSLREDVKTALSEVRLNLNLEKGRMKDAATSRNTNIHENETKILNEVDILHKEINDMKIQTNQWFTGFVGVVSSVVLIILFYF</sequence>
<name>YAN8_SCHPO</name>
<dbReference type="EMBL" id="CU329670">
    <property type="protein sequence ID" value="CAA92261.1"/>
    <property type="molecule type" value="Genomic_DNA"/>
</dbReference>
<dbReference type="PIR" id="T38740">
    <property type="entry name" value="T38740"/>
</dbReference>
<dbReference type="RefSeq" id="NP_593550.1">
    <property type="nucleotide sequence ID" value="NM_001018983.2"/>
</dbReference>
<dbReference type="SMR" id="Q10073"/>
<dbReference type="BioGRID" id="279797">
    <property type="interactions" value="10"/>
</dbReference>
<dbReference type="FunCoup" id="Q10073">
    <property type="interactions" value="204"/>
</dbReference>
<dbReference type="STRING" id="284812.Q10073"/>
<dbReference type="PaxDb" id="4896-SPAC3H1.08c.1"/>
<dbReference type="EnsemblFungi" id="SPAC3H1.08c.1">
    <property type="protein sequence ID" value="SPAC3H1.08c.1:pep"/>
    <property type="gene ID" value="SPAC3H1.08c"/>
</dbReference>
<dbReference type="KEGG" id="spo:2543375"/>
<dbReference type="PomBase" id="SPAC3H1.08c"/>
<dbReference type="VEuPathDB" id="FungiDB:SPAC3H1.08c"/>
<dbReference type="eggNOG" id="KOG3156">
    <property type="taxonomic scope" value="Eukaryota"/>
</dbReference>
<dbReference type="HOGENOM" id="CLU_1289607_0_0_1"/>
<dbReference type="InParanoid" id="Q10073"/>
<dbReference type="OMA" id="FSQCRHC"/>
<dbReference type="PhylomeDB" id="Q10073"/>
<dbReference type="PRO" id="PR:Q10073"/>
<dbReference type="Proteomes" id="UP000002485">
    <property type="component" value="Chromosome I"/>
</dbReference>
<dbReference type="GO" id="GO:0005743">
    <property type="term" value="C:mitochondrial inner membrane"/>
    <property type="evidence" value="ECO:0000266"/>
    <property type="project" value="PomBase"/>
</dbReference>
<dbReference type="GO" id="GO:0005739">
    <property type="term" value="C:mitochondrion"/>
    <property type="evidence" value="ECO:0007005"/>
    <property type="project" value="PomBase"/>
</dbReference>
<dbReference type="GO" id="GO:0036444">
    <property type="term" value="P:calcium import into the mitochondrion"/>
    <property type="evidence" value="ECO:0000266"/>
    <property type="project" value="PomBase"/>
</dbReference>
<dbReference type="GO" id="GO:0033617">
    <property type="term" value="P:mitochondrial cytochrome c oxidase assembly"/>
    <property type="evidence" value="ECO:0000318"/>
    <property type="project" value="GO_Central"/>
</dbReference>
<dbReference type="Gene3D" id="1.20.5.340">
    <property type="match status" value="1"/>
</dbReference>
<dbReference type="InterPro" id="IPR024461">
    <property type="entry name" value="CCDC90-like"/>
</dbReference>
<dbReference type="PANTHER" id="PTHR14360">
    <property type="entry name" value="PROTEIN FMP32, MITOCHONDRIAL"/>
    <property type="match status" value="1"/>
</dbReference>
<dbReference type="PANTHER" id="PTHR14360:SF1">
    <property type="entry name" value="PROTEIN FMP32, MITOCHONDRIAL"/>
    <property type="match status" value="1"/>
</dbReference>
<dbReference type="Pfam" id="PF07798">
    <property type="entry name" value="CCDC90-like"/>
    <property type="match status" value="1"/>
</dbReference>
<gene>
    <name type="ORF">SPAC3H1.08c</name>
</gene>
<comment type="subcellular location">
    <subcellularLocation>
        <location evidence="2">Mitochondrion</location>
    </subcellularLocation>
    <subcellularLocation>
        <location evidence="3">Membrane</location>
        <topology evidence="3">Single-pass membrane protein</topology>
    </subcellularLocation>
</comment>
<comment type="similarity">
    <text evidence="3">Belongs to the CCDC90 family.</text>
</comment>
<proteinExistence type="inferred from homology"/>
<organism>
    <name type="scientific">Schizosaccharomyces pombe (strain 972 / ATCC 24843)</name>
    <name type="common">Fission yeast</name>
    <dbReference type="NCBI Taxonomy" id="284812"/>
    <lineage>
        <taxon>Eukaryota</taxon>
        <taxon>Fungi</taxon>
        <taxon>Dikarya</taxon>
        <taxon>Ascomycota</taxon>
        <taxon>Taphrinomycotina</taxon>
        <taxon>Schizosaccharomycetes</taxon>
        <taxon>Schizosaccharomycetales</taxon>
        <taxon>Schizosaccharomycetaceae</taxon>
        <taxon>Schizosaccharomyces</taxon>
    </lineage>
</organism>
<reference key="1">
    <citation type="journal article" date="2002" name="Nature">
        <title>The genome sequence of Schizosaccharomyces pombe.</title>
        <authorList>
            <person name="Wood V."/>
            <person name="Gwilliam R."/>
            <person name="Rajandream M.A."/>
            <person name="Lyne M.H."/>
            <person name="Lyne R."/>
            <person name="Stewart A."/>
            <person name="Sgouros J.G."/>
            <person name="Peat N."/>
            <person name="Hayles J."/>
            <person name="Baker S.G."/>
            <person name="Basham D."/>
            <person name="Bowman S."/>
            <person name="Brooks K."/>
            <person name="Brown D."/>
            <person name="Brown S."/>
            <person name="Chillingworth T."/>
            <person name="Churcher C.M."/>
            <person name="Collins M."/>
            <person name="Connor R."/>
            <person name="Cronin A."/>
            <person name="Davis P."/>
            <person name="Feltwell T."/>
            <person name="Fraser A."/>
            <person name="Gentles S."/>
            <person name="Goble A."/>
            <person name="Hamlin N."/>
            <person name="Harris D.E."/>
            <person name="Hidalgo J."/>
            <person name="Hodgson G."/>
            <person name="Holroyd S."/>
            <person name="Hornsby T."/>
            <person name="Howarth S."/>
            <person name="Huckle E.J."/>
            <person name="Hunt S."/>
            <person name="Jagels K."/>
            <person name="James K.D."/>
            <person name="Jones L."/>
            <person name="Jones M."/>
            <person name="Leather S."/>
            <person name="McDonald S."/>
            <person name="McLean J."/>
            <person name="Mooney P."/>
            <person name="Moule S."/>
            <person name="Mungall K.L."/>
            <person name="Murphy L.D."/>
            <person name="Niblett D."/>
            <person name="Odell C."/>
            <person name="Oliver K."/>
            <person name="O'Neil S."/>
            <person name="Pearson D."/>
            <person name="Quail M.A."/>
            <person name="Rabbinowitsch E."/>
            <person name="Rutherford K.M."/>
            <person name="Rutter S."/>
            <person name="Saunders D."/>
            <person name="Seeger K."/>
            <person name="Sharp S."/>
            <person name="Skelton J."/>
            <person name="Simmonds M.N."/>
            <person name="Squares R."/>
            <person name="Squares S."/>
            <person name="Stevens K."/>
            <person name="Taylor K."/>
            <person name="Taylor R.G."/>
            <person name="Tivey A."/>
            <person name="Walsh S.V."/>
            <person name="Warren T."/>
            <person name="Whitehead S."/>
            <person name="Woodward J.R."/>
            <person name="Volckaert G."/>
            <person name="Aert R."/>
            <person name="Robben J."/>
            <person name="Grymonprez B."/>
            <person name="Weltjens I."/>
            <person name="Vanstreels E."/>
            <person name="Rieger M."/>
            <person name="Schaefer M."/>
            <person name="Mueller-Auer S."/>
            <person name="Gabel C."/>
            <person name="Fuchs M."/>
            <person name="Duesterhoeft A."/>
            <person name="Fritzc C."/>
            <person name="Holzer E."/>
            <person name="Moestl D."/>
            <person name="Hilbert H."/>
            <person name="Borzym K."/>
            <person name="Langer I."/>
            <person name="Beck A."/>
            <person name="Lehrach H."/>
            <person name="Reinhardt R."/>
            <person name="Pohl T.M."/>
            <person name="Eger P."/>
            <person name="Zimmermann W."/>
            <person name="Wedler H."/>
            <person name="Wambutt R."/>
            <person name="Purnelle B."/>
            <person name="Goffeau A."/>
            <person name="Cadieu E."/>
            <person name="Dreano S."/>
            <person name="Gloux S."/>
            <person name="Lelaure V."/>
            <person name="Mottier S."/>
            <person name="Galibert F."/>
            <person name="Aves S.J."/>
            <person name="Xiang Z."/>
            <person name="Hunt C."/>
            <person name="Moore K."/>
            <person name="Hurst S.M."/>
            <person name="Lucas M."/>
            <person name="Rochet M."/>
            <person name="Gaillardin C."/>
            <person name="Tallada V.A."/>
            <person name="Garzon A."/>
            <person name="Thode G."/>
            <person name="Daga R.R."/>
            <person name="Cruzado L."/>
            <person name="Jimenez J."/>
            <person name="Sanchez M."/>
            <person name="del Rey F."/>
            <person name="Benito J."/>
            <person name="Dominguez A."/>
            <person name="Revuelta J.L."/>
            <person name="Moreno S."/>
            <person name="Armstrong J."/>
            <person name="Forsburg S.L."/>
            <person name="Cerutti L."/>
            <person name="Lowe T."/>
            <person name="McCombie W.R."/>
            <person name="Paulsen I."/>
            <person name="Potashkin J."/>
            <person name="Shpakovski G.V."/>
            <person name="Ussery D."/>
            <person name="Barrell B.G."/>
            <person name="Nurse P."/>
        </authorList>
    </citation>
    <scope>NUCLEOTIDE SEQUENCE [LARGE SCALE GENOMIC DNA]</scope>
    <source>
        <strain>972 / ATCC 24843</strain>
    </source>
</reference>
<reference key="2">
    <citation type="journal article" date="2006" name="Nat. Biotechnol.">
        <title>ORFeome cloning and global analysis of protein localization in the fission yeast Schizosaccharomyces pombe.</title>
        <authorList>
            <person name="Matsuyama A."/>
            <person name="Arai R."/>
            <person name="Yashiroda Y."/>
            <person name="Shirai A."/>
            <person name="Kamata A."/>
            <person name="Sekido S."/>
            <person name="Kobayashi Y."/>
            <person name="Hashimoto A."/>
            <person name="Hamamoto M."/>
            <person name="Hiraoka Y."/>
            <person name="Horinouchi S."/>
            <person name="Yoshida M."/>
        </authorList>
    </citation>
    <scope>SUBCELLULAR LOCATION [LARGE SCALE ANALYSIS]</scope>
</reference>
<feature type="transit peptide" description="Mitochondrion" evidence="1">
    <location>
        <begin position="1"/>
        <end status="unknown"/>
    </location>
</feature>
<feature type="chain" id="PRO_0000116448" description="Uncharacterized CCDC90 family protein C3H1.08c, mitochondrial">
    <location>
        <begin status="unknown"/>
        <end position="211"/>
    </location>
</feature>
<feature type="transmembrane region" description="Helical" evidence="1">
    <location>
        <begin position="191"/>
        <end position="211"/>
    </location>
</feature>
<feature type="coiled-coil region" evidence="1">
    <location>
        <begin position="105"/>
        <end position="143"/>
    </location>
</feature>